<gene>
    <name type="primary">OR5AU1</name>
</gene>
<proteinExistence type="evidence at transcript level"/>
<organism>
    <name type="scientific">Homo sapiens</name>
    <name type="common">Human</name>
    <dbReference type="NCBI Taxonomy" id="9606"/>
    <lineage>
        <taxon>Eukaryota</taxon>
        <taxon>Metazoa</taxon>
        <taxon>Chordata</taxon>
        <taxon>Craniata</taxon>
        <taxon>Vertebrata</taxon>
        <taxon>Euteleostomi</taxon>
        <taxon>Mammalia</taxon>
        <taxon>Eutheria</taxon>
        <taxon>Euarchontoglires</taxon>
        <taxon>Primates</taxon>
        <taxon>Haplorrhini</taxon>
        <taxon>Catarrhini</taxon>
        <taxon>Hominidae</taxon>
        <taxon>Homo</taxon>
    </lineage>
</organism>
<accession>Q8NGC0</accession>
<accession>B2RP78</accession>
<accession>Q6IEU2</accession>
<accession>Q96R10</accession>
<keyword id="KW-1003">Cell membrane</keyword>
<keyword id="KW-1015">Disulfide bond</keyword>
<keyword id="KW-0297">G-protein coupled receptor</keyword>
<keyword id="KW-0325">Glycoprotein</keyword>
<keyword id="KW-0472">Membrane</keyword>
<keyword id="KW-0552">Olfaction</keyword>
<keyword id="KW-0675">Receptor</keyword>
<keyword id="KW-1185">Reference proteome</keyword>
<keyword id="KW-0716">Sensory transduction</keyword>
<keyword id="KW-0807">Transducer</keyword>
<keyword id="KW-0812">Transmembrane</keyword>
<keyword id="KW-1133">Transmembrane helix</keyword>
<evidence type="ECO:0000255" key="1"/>
<evidence type="ECO:0000255" key="2">
    <source>
        <dbReference type="PROSITE-ProRule" id="PRU00521"/>
    </source>
</evidence>
<evidence type="ECO:0000269" key="3">
    <source>
    </source>
</evidence>
<evidence type="ECO:0000305" key="4"/>
<protein>
    <recommendedName>
        <fullName>Olfactory receptor 5AU1</fullName>
    </recommendedName>
    <alternativeName>
        <fullName>Olfactory receptor OR14-38</fullName>
    </alternativeName>
</protein>
<feature type="chain" id="PRO_0000150582" description="Olfactory receptor 5AU1">
    <location>
        <begin position="1"/>
        <end position="362"/>
    </location>
</feature>
<feature type="topological domain" description="Extracellular" evidence="1">
    <location>
        <begin position="1"/>
        <end position="79"/>
    </location>
</feature>
<feature type="transmembrane region" description="Helical; Name=1" evidence="1">
    <location>
        <begin position="80"/>
        <end position="100"/>
    </location>
</feature>
<feature type="topological domain" description="Cytoplasmic" evidence="1">
    <location>
        <begin position="101"/>
        <end position="116"/>
    </location>
</feature>
<feature type="transmembrane region" description="Helical; Name=2" evidence="1">
    <location>
        <begin position="117"/>
        <end position="139"/>
    </location>
</feature>
<feature type="topological domain" description="Extracellular" evidence="1">
    <location>
        <begin position="140"/>
        <end position="150"/>
    </location>
</feature>
<feature type="transmembrane region" description="Helical; Name=3" evidence="1">
    <location>
        <begin position="151"/>
        <end position="171"/>
    </location>
</feature>
<feature type="topological domain" description="Cytoplasmic" evidence="1">
    <location>
        <begin position="172"/>
        <end position="194"/>
    </location>
</feature>
<feature type="transmembrane region" description="Helical; Name=4" evidence="1">
    <location>
        <begin position="195"/>
        <end position="215"/>
    </location>
</feature>
<feature type="topological domain" description="Extracellular" evidence="1">
    <location>
        <begin position="216"/>
        <end position="247"/>
    </location>
</feature>
<feature type="transmembrane region" description="Helical; Name=5" evidence="1">
    <location>
        <begin position="248"/>
        <end position="268"/>
    </location>
</feature>
<feature type="topological domain" description="Cytoplasmic" evidence="1">
    <location>
        <begin position="269"/>
        <end position="290"/>
    </location>
</feature>
<feature type="transmembrane region" description="Helical; Name=6" evidence="1">
    <location>
        <begin position="291"/>
        <end position="311"/>
    </location>
</feature>
<feature type="topological domain" description="Extracellular" evidence="1">
    <location>
        <begin position="312"/>
        <end position="322"/>
    </location>
</feature>
<feature type="transmembrane region" description="Helical; Name=7" evidence="1">
    <location>
        <begin position="323"/>
        <end position="343"/>
    </location>
</feature>
<feature type="topological domain" description="Cytoplasmic" evidence="1">
    <location>
        <begin position="344"/>
        <end position="362"/>
    </location>
</feature>
<feature type="glycosylation site" description="N-linked (GlcNAc...) asparagine" evidence="1">
    <location>
        <position position="56"/>
    </location>
</feature>
<feature type="disulfide bond" evidence="2">
    <location>
        <begin position="148"/>
        <end position="230"/>
    </location>
</feature>
<feature type="sequence variant" id="VAR_047234" description="In dbSNP:rs17102042.">
    <original>V</original>
    <variation>M</variation>
    <location>
        <position position="80"/>
    </location>
</feature>
<feature type="sequence variant" id="VAR_047235" description="In dbSNP:rs4982419." evidence="3">
    <original>L</original>
    <variation>F</variation>
    <location>
        <position position="117"/>
    </location>
</feature>
<feature type="sequence variant" id="VAR_062039" description="In dbSNP:rs59120409.">
    <original>S</original>
    <variation>L</variation>
    <location>
        <position position="194"/>
    </location>
</feature>
<feature type="sequence variant" id="VAR_062040" description="In dbSNP:rs57985939.">
    <original>N</original>
    <variation>K</variation>
    <location>
        <position position="274"/>
    </location>
</feature>
<feature type="sequence variant" id="VAR_047236" description="In dbSNP:rs7145814." evidence="3">
    <original>I</original>
    <variation>V</variation>
    <location>
        <position position="299"/>
    </location>
</feature>
<sequence>MTEFHLQSQMPSIRLIFRRLSLGRIKPSQSPRCSTSFMVVPSFSIAEHWRRMKGANLSQGMEFELLGLTTDPQLQRLLFVVFLGMYTATLLGNLVMFLLIHVSATLHTPMYSLLKSLSFLDFCYSSTVVPQTLVNFLAKRKVISYFGCMTQMFFYAGFATSECYLIAAMAYDRYAAICNPLLYSTIMSPEVCASLIVGSYSAGFLNSLIHTGCIFSLKFCGAHVVTHFFCDGPPILSLSCVDTSLCEILLFIFAGFNLLSCTLTILISYFLILNTILKMSSAQGRFKAFSTCASHLTAICLFFGTTLFMYLRPRSSYSLTQDRTVAVIYTVVIPVLNPLMYSLRNKDVKKALIKVWGRKTME</sequence>
<name>O5AU1_HUMAN</name>
<comment type="function">
    <text evidence="4">Odorant receptor.</text>
</comment>
<comment type="subcellular location">
    <subcellularLocation>
        <location>Cell membrane</location>
        <topology>Multi-pass membrane protein</topology>
    </subcellularLocation>
</comment>
<comment type="similarity">
    <text evidence="2">Belongs to the G-protein coupled receptor 1 family.</text>
</comment>
<comment type="sequence caution" evidence="4">
    <conflict type="erroneous initiation">
        <sequence resource="EMBL-CDS" id="BAC06114"/>
    </conflict>
</comment>
<comment type="online information" name="Human Olfactory Receptor Data Exploratorium (HORDE)">
    <link uri="http://genome.weizmann.ac.il/horde/card/index/symbol:OR5AU1"/>
</comment>
<reference key="1">
    <citation type="submission" date="2001-07" db="EMBL/GenBank/DDBJ databases">
        <title>Genome-wide discovery and analysis of human seven transmembrane helix receptor genes.</title>
        <authorList>
            <person name="Suwa M."/>
            <person name="Sato T."/>
            <person name="Okouchi I."/>
            <person name="Arita M."/>
            <person name="Futami K."/>
            <person name="Matsumoto S."/>
            <person name="Tsutsumi S."/>
            <person name="Aburatani H."/>
            <person name="Asai K."/>
            <person name="Akiyama Y."/>
        </authorList>
    </citation>
    <scope>NUCLEOTIDE SEQUENCE [GENOMIC DNA]</scope>
</reference>
<reference key="2">
    <citation type="journal article" date="2003" name="Nature">
        <title>The DNA sequence and analysis of human chromosome 14.</title>
        <authorList>
            <person name="Heilig R."/>
            <person name="Eckenberg R."/>
            <person name="Petit J.-L."/>
            <person name="Fonknechten N."/>
            <person name="Da Silva C."/>
            <person name="Cattolico L."/>
            <person name="Levy M."/>
            <person name="Barbe V."/>
            <person name="De Berardinis V."/>
            <person name="Ureta-Vidal A."/>
            <person name="Pelletier E."/>
            <person name="Vico V."/>
            <person name="Anthouard V."/>
            <person name="Rowen L."/>
            <person name="Madan A."/>
            <person name="Qin S."/>
            <person name="Sun H."/>
            <person name="Du H."/>
            <person name="Pepin K."/>
            <person name="Artiguenave F."/>
            <person name="Robert C."/>
            <person name="Cruaud C."/>
            <person name="Bruels T."/>
            <person name="Jaillon O."/>
            <person name="Friedlander L."/>
            <person name="Samson G."/>
            <person name="Brottier P."/>
            <person name="Cure S."/>
            <person name="Segurens B."/>
            <person name="Aniere F."/>
            <person name="Samain S."/>
            <person name="Crespeau H."/>
            <person name="Abbasi N."/>
            <person name="Aiach N."/>
            <person name="Boscus D."/>
            <person name="Dickhoff R."/>
            <person name="Dors M."/>
            <person name="Dubois I."/>
            <person name="Friedman C."/>
            <person name="Gouyvenoux M."/>
            <person name="James R."/>
            <person name="Madan A."/>
            <person name="Mairey-Estrada B."/>
            <person name="Mangenot S."/>
            <person name="Martins N."/>
            <person name="Menard M."/>
            <person name="Oztas S."/>
            <person name="Ratcliffe A."/>
            <person name="Shaffer T."/>
            <person name="Trask B."/>
            <person name="Vacherie B."/>
            <person name="Bellemere C."/>
            <person name="Belser C."/>
            <person name="Besnard-Gonnet M."/>
            <person name="Bartol-Mavel D."/>
            <person name="Boutard M."/>
            <person name="Briez-Silla S."/>
            <person name="Combette S."/>
            <person name="Dufosse-Laurent V."/>
            <person name="Ferron C."/>
            <person name="Lechaplais C."/>
            <person name="Louesse C."/>
            <person name="Muselet D."/>
            <person name="Magdelenat G."/>
            <person name="Pateau E."/>
            <person name="Petit E."/>
            <person name="Sirvain-Trukniewicz P."/>
            <person name="Trybou A."/>
            <person name="Vega-Czarny N."/>
            <person name="Bataille E."/>
            <person name="Bluet E."/>
            <person name="Bordelais I."/>
            <person name="Dubois M."/>
            <person name="Dumont C."/>
            <person name="Guerin T."/>
            <person name="Haffray S."/>
            <person name="Hammadi R."/>
            <person name="Muanga J."/>
            <person name="Pellouin V."/>
            <person name="Robert D."/>
            <person name="Wunderle E."/>
            <person name="Gauguet G."/>
            <person name="Roy A."/>
            <person name="Sainte-Marthe L."/>
            <person name="Verdier J."/>
            <person name="Verdier-Discala C."/>
            <person name="Hillier L.W."/>
            <person name="Fulton L."/>
            <person name="McPherson J."/>
            <person name="Matsuda F."/>
            <person name="Wilson R."/>
            <person name="Scarpelli C."/>
            <person name="Gyapay G."/>
            <person name="Wincker P."/>
            <person name="Saurin W."/>
            <person name="Quetier F."/>
            <person name="Waterston R."/>
            <person name="Hood L."/>
            <person name="Weissenbach J."/>
        </authorList>
    </citation>
    <scope>NUCLEOTIDE SEQUENCE [LARGE SCALE GENOMIC DNA]</scope>
</reference>
<reference key="3">
    <citation type="journal article" date="2004" name="Genome Res.">
        <title>The status, quality, and expansion of the NIH full-length cDNA project: the Mammalian Gene Collection (MGC).</title>
        <authorList>
            <consortium name="The MGC Project Team"/>
        </authorList>
    </citation>
    <scope>NUCLEOTIDE SEQUENCE [LARGE SCALE MRNA]</scope>
    <scope>VARIANTS PHE-117 AND VAL-299</scope>
</reference>
<reference key="4">
    <citation type="journal article" date="2002" name="Genomics">
        <title>DEFOG: a practical scheme for deciphering families of genes.</title>
        <authorList>
            <person name="Fuchs T."/>
            <person name="Malecova B."/>
            <person name="Linhart C."/>
            <person name="Sharan R."/>
            <person name="Khen M."/>
            <person name="Herwig R."/>
            <person name="Shmulevich D."/>
            <person name="Elkon R."/>
            <person name="Steinfath M."/>
            <person name="O'Brien J.K."/>
            <person name="Radelof U."/>
            <person name="Lehrach H."/>
            <person name="Lancet D."/>
            <person name="Shamir R."/>
        </authorList>
    </citation>
    <scope>NUCLEOTIDE SEQUENCE [GENOMIC DNA] OF 119-335</scope>
</reference>
<reference key="5">
    <citation type="journal article" date="2004" name="Proc. Natl. Acad. Sci. U.S.A.">
        <title>The human olfactory receptor gene family.</title>
        <authorList>
            <person name="Malnic B."/>
            <person name="Godfrey P.A."/>
            <person name="Buck L.B."/>
        </authorList>
    </citation>
    <scope>IDENTIFICATION</scope>
</reference>
<reference key="6">
    <citation type="journal article" date="2004" name="Proc. Natl. Acad. Sci. U.S.A.">
        <authorList>
            <person name="Malnic B."/>
            <person name="Godfrey P.A."/>
            <person name="Buck L.B."/>
        </authorList>
    </citation>
    <scope>ERRATUM OF PUBMED:14983052</scope>
</reference>
<dbReference type="EMBL" id="AB065898">
    <property type="protein sequence ID" value="BAC06114.1"/>
    <property type="status" value="ALT_INIT"/>
    <property type="molecule type" value="Genomic_DNA"/>
</dbReference>
<dbReference type="EMBL" id="AL157687">
    <property type="status" value="NOT_ANNOTATED_CDS"/>
    <property type="molecule type" value="Genomic_DNA"/>
</dbReference>
<dbReference type="EMBL" id="BC137304">
    <property type="protein sequence ID" value="AAI37305.1"/>
    <property type="molecule type" value="mRNA"/>
</dbReference>
<dbReference type="EMBL" id="BC137305">
    <property type="protein sequence ID" value="AAI37306.1"/>
    <property type="molecule type" value="mRNA"/>
</dbReference>
<dbReference type="EMBL" id="AF399635">
    <property type="protein sequence ID" value="AAK95120.1"/>
    <property type="molecule type" value="Genomic_DNA"/>
</dbReference>
<dbReference type="EMBL" id="BK004520">
    <property type="protein sequence ID" value="DAA04918.1"/>
    <property type="molecule type" value="Genomic_DNA"/>
</dbReference>
<dbReference type="RefSeq" id="NP_001004731.1">
    <property type="nucleotide sequence ID" value="NM_001004731.1"/>
</dbReference>
<dbReference type="SMR" id="Q8NGC0"/>
<dbReference type="FunCoup" id="Q8NGC0">
    <property type="interactions" value="417"/>
</dbReference>
<dbReference type="STRING" id="9606.ENSP00000493431"/>
<dbReference type="GlyCosmos" id="Q8NGC0">
    <property type="glycosylation" value="1 site, No reported glycans"/>
</dbReference>
<dbReference type="GlyGen" id="Q8NGC0">
    <property type="glycosylation" value="1 site"/>
</dbReference>
<dbReference type="iPTMnet" id="Q8NGC0"/>
<dbReference type="PhosphoSitePlus" id="Q8NGC0"/>
<dbReference type="BioMuta" id="OR5AU1"/>
<dbReference type="DMDM" id="212276450"/>
<dbReference type="PaxDb" id="9606-ENSP00000302057"/>
<dbReference type="ProteomicsDB" id="73470"/>
<dbReference type="Antibodypedia" id="56287">
    <property type="antibodies" value="46 antibodies from 15 providers"/>
</dbReference>
<dbReference type="DNASU" id="390445"/>
<dbReference type="Ensembl" id="ENST00000641822.1">
    <property type="protein sequence ID" value="ENSP00000493431.1"/>
    <property type="gene ID" value="ENSG00000169327.5"/>
</dbReference>
<dbReference type="GeneID" id="390445"/>
<dbReference type="KEGG" id="hsa:390445"/>
<dbReference type="UCSC" id="uc010tlp.3">
    <property type="organism name" value="human"/>
</dbReference>
<dbReference type="AGR" id="HGNC:15362"/>
<dbReference type="CTD" id="390445"/>
<dbReference type="GeneCards" id="OR5AU1"/>
<dbReference type="HGNC" id="HGNC:15362">
    <property type="gene designation" value="OR5AU1"/>
</dbReference>
<dbReference type="HPA" id="ENSG00000169327">
    <property type="expression patterns" value="Not detected"/>
</dbReference>
<dbReference type="neXtProt" id="NX_Q8NGC0"/>
<dbReference type="OpenTargets" id="ENSG00000169327"/>
<dbReference type="PharmGKB" id="PA32474"/>
<dbReference type="VEuPathDB" id="HostDB:ENSG00000169327"/>
<dbReference type="eggNOG" id="ENOG502T9SD">
    <property type="taxonomic scope" value="Eukaryota"/>
</dbReference>
<dbReference type="GeneTree" id="ENSGT01120000271834"/>
<dbReference type="HOGENOM" id="CLU_012526_1_0_1"/>
<dbReference type="InParanoid" id="Q8NGC0"/>
<dbReference type="OrthoDB" id="9823959at2759"/>
<dbReference type="PAN-GO" id="Q8NGC0">
    <property type="GO annotations" value="2 GO annotations based on evolutionary models"/>
</dbReference>
<dbReference type="PhylomeDB" id="Q8NGC0"/>
<dbReference type="TreeFam" id="TF352750"/>
<dbReference type="PathwayCommons" id="Q8NGC0"/>
<dbReference type="Reactome" id="R-HSA-9752946">
    <property type="pathway name" value="Expression and translocation of olfactory receptors"/>
</dbReference>
<dbReference type="BioGRID-ORCS" id="390445">
    <property type="hits" value="10 hits in 754 CRISPR screens"/>
</dbReference>
<dbReference type="GeneWiki" id="OR5AU1"/>
<dbReference type="GenomeRNAi" id="390445"/>
<dbReference type="Pharos" id="Q8NGC0">
    <property type="development level" value="Tdark"/>
</dbReference>
<dbReference type="PRO" id="PR:Q8NGC0"/>
<dbReference type="Proteomes" id="UP000005640">
    <property type="component" value="Chromosome 14"/>
</dbReference>
<dbReference type="RNAct" id="Q8NGC0">
    <property type="molecule type" value="protein"/>
</dbReference>
<dbReference type="Bgee" id="ENSG00000169327">
    <property type="expression patterns" value="Expressed in blood and 1 other cell type or tissue"/>
</dbReference>
<dbReference type="ExpressionAtlas" id="Q8NGC0">
    <property type="expression patterns" value="baseline and differential"/>
</dbReference>
<dbReference type="GO" id="GO:0005886">
    <property type="term" value="C:plasma membrane"/>
    <property type="evidence" value="ECO:0007669"/>
    <property type="project" value="UniProtKB-SubCell"/>
</dbReference>
<dbReference type="GO" id="GO:0004930">
    <property type="term" value="F:G protein-coupled receptor activity"/>
    <property type="evidence" value="ECO:0007669"/>
    <property type="project" value="UniProtKB-KW"/>
</dbReference>
<dbReference type="GO" id="GO:0005549">
    <property type="term" value="F:odorant binding"/>
    <property type="evidence" value="ECO:0000318"/>
    <property type="project" value="GO_Central"/>
</dbReference>
<dbReference type="GO" id="GO:0004984">
    <property type="term" value="F:olfactory receptor activity"/>
    <property type="evidence" value="ECO:0000318"/>
    <property type="project" value="GO_Central"/>
</dbReference>
<dbReference type="CDD" id="cd15408">
    <property type="entry name" value="7tmA_OR5AK3-like"/>
    <property type="match status" value="1"/>
</dbReference>
<dbReference type="FunFam" id="1.20.1070.10:FF:000003">
    <property type="entry name" value="Olfactory receptor"/>
    <property type="match status" value="1"/>
</dbReference>
<dbReference type="Gene3D" id="1.20.1070.10">
    <property type="entry name" value="Rhodopsin 7-helix transmembrane proteins"/>
    <property type="match status" value="1"/>
</dbReference>
<dbReference type="InterPro" id="IPR000276">
    <property type="entry name" value="GPCR_Rhodpsn"/>
</dbReference>
<dbReference type="InterPro" id="IPR017452">
    <property type="entry name" value="GPCR_Rhodpsn_7TM"/>
</dbReference>
<dbReference type="InterPro" id="IPR000725">
    <property type="entry name" value="Olfact_rcpt"/>
</dbReference>
<dbReference type="PANTHER" id="PTHR48018">
    <property type="entry name" value="OLFACTORY RECEPTOR"/>
    <property type="match status" value="1"/>
</dbReference>
<dbReference type="Pfam" id="PF13853">
    <property type="entry name" value="7tm_4"/>
    <property type="match status" value="1"/>
</dbReference>
<dbReference type="PRINTS" id="PR00237">
    <property type="entry name" value="GPCRRHODOPSN"/>
</dbReference>
<dbReference type="PRINTS" id="PR00245">
    <property type="entry name" value="OLFACTORYR"/>
</dbReference>
<dbReference type="SUPFAM" id="SSF81321">
    <property type="entry name" value="Family A G protein-coupled receptor-like"/>
    <property type="match status" value="1"/>
</dbReference>
<dbReference type="PROSITE" id="PS00237">
    <property type="entry name" value="G_PROTEIN_RECEP_F1_1"/>
    <property type="match status" value="1"/>
</dbReference>
<dbReference type="PROSITE" id="PS50262">
    <property type="entry name" value="G_PROTEIN_RECEP_F1_2"/>
    <property type="match status" value="1"/>
</dbReference>